<sequence length="465" mass="52356">MNKENKLIPGLPSGFEDRWGKKLILKKKLINTIEANFVKFGFGALETPSFEISENIGSFLADDDSNPMSDVFSFKDGEKNITLRYDLSSPLARFVAQNNQELPLPYKRYQMGDVWRNEKAGNARYRSFLQCDADIVGNVNPAQANAELCNLIASTLLACGLKKDQFVVNISNRKIVQGLIEDLKISDDKKIKVMRAIDKLDKPGFGLRGVEDLLKEERVDASGAVTKGANLTDDQASQIINFLKVKDLKELKENLKNPLSQEGIKELEDLLEIVSYGDYLDQIKTNFTIVRGLAYYDGFCVETNLNFKAKNSKGKEVDIGSICSGGQYNKLISRFKGVDIPGTGMSFGVDRLLFAMMQLDQIEVDEKKPVIICVMDEKYLKNYYEILKVLRDNNINSEIFLDSKKNLGKQLTYANKKQCPVAVICGENEFKDNTITLKNLLGVKGENNQLTFPKENLINEIKKFI</sequence>
<name>SYH_PELUB</name>
<proteinExistence type="inferred from homology"/>
<feature type="chain" id="PRO_0000136217" description="Histidine--tRNA ligase">
    <location>
        <begin position="1"/>
        <end position="465"/>
    </location>
</feature>
<gene>
    <name type="primary">hisS</name>
    <name type="ordered locus">SAR11_0478</name>
</gene>
<keyword id="KW-0030">Aminoacyl-tRNA synthetase</keyword>
<keyword id="KW-0067">ATP-binding</keyword>
<keyword id="KW-0963">Cytoplasm</keyword>
<keyword id="KW-0436">Ligase</keyword>
<keyword id="KW-0547">Nucleotide-binding</keyword>
<keyword id="KW-0648">Protein biosynthesis</keyword>
<keyword id="KW-1185">Reference proteome</keyword>
<comment type="catalytic activity">
    <reaction>
        <text>tRNA(His) + L-histidine + ATP = L-histidyl-tRNA(His) + AMP + diphosphate + H(+)</text>
        <dbReference type="Rhea" id="RHEA:17313"/>
        <dbReference type="Rhea" id="RHEA-COMP:9665"/>
        <dbReference type="Rhea" id="RHEA-COMP:9689"/>
        <dbReference type="ChEBI" id="CHEBI:15378"/>
        <dbReference type="ChEBI" id="CHEBI:30616"/>
        <dbReference type="ChEBI" id="CHEBI:33019"/>
        <dbReference type="ChEBI" id="CHEBI:57595"/>
        <dbReference type="ChEBI" id="CHEBI:78442"/>
        <dbReference type="ChEBI" id="CHEBI:78527"/>
        <dbReference type="ChEBI" id="CHEBI:456215"/>
        <dbReference type="EC" id="6.1.1.21"/>
    </reaction>
</comment>
<comment type="subunit">
    <text evidence="1">Homodimer.</text>
</comment>
<comment type="subcellular location">
    <subcellularLocation>
        <location evidence="1">Cytoplasm</location>
    </subcellularLocation>
</comment>
<comment type="similarity">
    <text evidence="2">Belongs to the class-II aminoacyl-tRNA synthetase family.</text>
</comment>
<dbReference type="EC" id="6.1.1.21"/>
<dbReference type="EMBL" id="CP000084">
    <property type="protein sequence ID" value="AAZ21300.1"/>
    <property type="molecule type" value="Genomic_DNA"/>
</dbReference>
<dbReference type="RefSeq" id="WP_011281738.1">
    <property type="nucleotide sequence ID" value="NC_007205.1"/>
</dbReference>
<dbReference type="SMR" id="Q4FND9"/>
<dbReference type="STRING" id="335992.SAR11_0478"/>
<dbReference type="GeneID" id="66294980"/>
<dbReference type="KEGG" id="pub:SAR11_0478"/>
<dbReference type="eggNOG" id="COG0124">
    <property type="taxonomic scope" value="Bacteria"/>
</dbReference>
<dbReference type="HOGENOM" id="CLU_025113_3_2_5"/>
<dbReference type="OrthoDB" id="9800814at2"/>
<dbReference type="Proteomes" id="UP000002528">
    <property type="component" value="Chromosome"/>
</dbReference>
<dbReference type="GO" id="GO:0005737">
    <property type="term" value="C:cytoplasm"/>
    <property type="evidence" value="ECO:0007669"/>
    <property type="project" value="UniProtKB-SubCell"/>
</dbReference>
<dbReference type="GO" id="GO:0005524">
    <property type="term" value="F:ATP binding"/>
    <property type="evidence" value="ECO:0007669"/>
    <property type="project" value="UniProtKB-KW"/>
</dbReference>
<dbReference type="GO" id="GO:0004821">
    <property type="term" value="F:histidine-tRNA ligase activity"/>
    <property type="evidence" value="ECO:0007669"/>
    <property type="project" value="UniProtKB-EC"/>
</dbReference>
<dbReference type="GO" id="GO:0006427">
    <property type="term" value="P:histidyl-tRNA aminoacylation"/>
    <property type="evidence" value="ECO:0007669"/>
    <property type="project" value="InterPro"/>
</dbReference>
<dbReference type="CDD" id="cd00773">
    <property type="entry name" value="HisRS-like_core"/>
    <property type="match status" value="1"/>
</dbReference>
<dbReference type="CDD" id="cd00859">
    <property type="entry name" value="HisRS_anticodon"/>
    <property type="match status" value="1"/>
</dbReference>
<dbReference type="Gene3D" id="3.40.50.800">
    <property type="entry name" value="Anticodon-binding domain"/>
    <property type="match status" value="1"/>
</dbReference>
<dbReference type="Gene3D" id="3.30.930.10">
    <property type="entry name" value="Bira Bifunctional Protein, Domain 2"/>
    <property type="match status" value="1"/>
</dbReference>
<dbReference type="InterPro" id="IPR006195">
    <property type="entry name" value="aa-tRNA-synth_II"/>
</dbReference>
<dbReference type="InterPro" id="IPR045864">
    <property type="entry name" value="aa-tRNA-synth_II/BPL/LPL"/>
</dbReference>
<dbReference type="InterPro" id="IPR004154">
    <property type="entry name" value="Anticodon-bd"/>
</dbReference>
<dbReference type="InterPro" id="IPR036621">
    <property type="entry name" value="Anticodon-bd_dom_sf"/>
</dbReference>
<dbReference type="InterPro" id="IPR015807">
    <property type="entry name" value="His-tRNA-ligase"/>
</dbReference>
<dbReference type="InterPro" id="IPR041715">
    <property type="entry name" value="HisRS-like_core"/>
</dbReference>
<dbReference type="InterPro" id="IPR004516">
    <property type="entry name" value="HisRS/HisZ"/>
</dbReference>
<dbReference type="InterPro" id="IPR033656">
    <property type="entry name" value="HisRS_anticodon"/>
</dbReference>
<dbReference type="NCBIfam" id="TIGR00442">
    <property type="entry name" value="hisS"/>
    <property type="match status" value="1"/>
</dbReference>
<dbReference type="PANTHER" id="PTHR11476:SF7">
    <property type="entry name" value="HISTIDINE--TRNA LIGASE"/>
    <property type="match status" value="1"/>
</dbReference>
<dbReference type="PANTHER" id="PTHR11476">
    <property type="entry name" value="HISTIDYL-TRNA SYNTHETASE"/>
    <property type="match status" value="1"/>
</dbReference>
<dbReference type="Pfam" id="PF03129">
    <property type="entry name" value="HGTP_anticodon"/>
    <property type="match status" value="1"/>
</dbReference>
<dbReference type="Pfam" id="PF13393">
    <property type="entry name" value="tRNA-synt_His"/>
    <property type="match status" value="1"/>
</dbReference>
<dbReference type="PIRSF" id="PIRSF001549">
    <property type="entry name" value="His-tRNA_synth"/>
    <property type="match status" value="1"/>
</dbReference>
<dbReference type="SUPFAM" id="SSF52954">
    <property type="entry name" value="Class II aaRS ABD-related"/>
    <property type="match status" value="1"/>
</dbReference>
<dbReference type="SUPFAM" id="SSF55681">
    <property type="entry name" value="Class II aaRS and biotin synthetases"/>
    <property type="match status" value="1"/>
</dbReference>
<dbReference type="PROSITE" id="PS50862">
    <property type="entry name" value="AA_TRNA_LIGASE_II"/>
    <property type="match status" value="1"/>
</dbReference>
<evidence type="ECO:0000250" key="1"/>
<evidence type="ECO:0000305" key="2"/>
<accession>Q4FND9</accession>
<reference key="1">
    <citation type="journal article" date="2005" name="Science">
        <title>Genome streamlining in a cosmopolitan oceanic bacterium.</title>
        <authorList>
            <person name="Giovannoni S.J."/>
            <person name="Tripp H.J."/>
            <person name="Givan S."/>
            <person name="Podar M."/>
            <person name="Vergin K.L."/>
            <person name="Baptista D."/>
            <person name="Bibbs L."/>
            <person name="Eads J."/>
            <person name="Richardson T.H."/>
            <person name="Noordewier M."/>
            <person name="Rappe M.S."/>
            <person name="Short J.M."/>
            <person name="Carrington J.C."/>
            <person name="Mathur E.J."/>
        </authorList>
    </citation>
    <scope>NUCLEOTIDE SEQUENCE [LARGE SCALE GENOMIC DNA]</scope>
    <source>
        <strain>HTCC1062</strain>
    </source>
</reference>
<protein>
    <recommendedName>
        <fullName>Histidine--tRNA ligase</fullName>
        <ecNumber>6.1.1.21</ecNumber>
    </recommendedName>
    <alternativeName>
        <fullName>Histidyl-tRNA synthetase</fullName>
        <shortName>HisRS</shortName>
    </alternativeName>
</protein>
<organism>
    <name type="scientific">Pelagibacter ubique (strain HTCC1062)</name>
    <dbReference type="NCBI Taxonomy" id="335992"/>
    <lineage>
        <taxon>Bacteria</taxon>
        <taxon>Pseudomonadati</taxon>
        <taxon>Pseudomonadota</taxon>
        <taxon>Alphaproteobacteria</taxon>
        <taxon>Candidatus Pelagibacterales</taxon>
        <taxon>Candidatus Pelagibacteraceae</taxon>
        <taxon>Candidatus Pelagibacter</taxon>
    </lineage>
</organism>